<feature type="chain" id="PRO_0000094457" description="Chloride channel protein ClC-Ka">
    <location>
        <begin position="1"/>
        <end position="687"/>
    </location>
</feature>
<feature type="transmembrane region" description="Helical" evidence="3">
    <location>
        <begin position="52"/>
        <end position="72"/>
    </location>
</feature>
<feature type="transmembrane region" description="Helical" evidence="3">
    <location>
        <begin position="161"/>
        <end position="181"/>
    </location>
</feature>
<feature type="transmembrane region" description="Helical" evidence="3">
    <location>
        <begin position="202"/>
        <end position="222"/>
    </location>
</feature>
<feature type="transmembrane region" description="Helical" evidence="3">
    <location>
        <begin position="236"/>
        <end position="256"/>
    </location>
</feature>
<feature type="transmembrane region" description="Helical" evidence="3">
    <location>
        <begin position="282"/>
        <end position="302"/>
    </location>
</feature>
<feature type="transmembrane region" description="Helical" evidence="3">
    <location>
        <begin position="325"/>
        <end position="345"/>
    </location>
</feature>
<feature type="transmembrane region" description="Helical" evidence="3">
    <location>
        <begin position="396"/>
        <end position="416"/>
    </location>
</feature>
<feature type="transmembrane region" description="Helical" evidence="3">
    <location>
        <begin position="417"/>
        <end position="437"/>
    </location>
</feature>
<feature type="transmembrane region" description="Helical" evidence="3">
    <location>
        <begin position="452"/>
        <end position="472"/>
    </location>
</feature>
<feature type="transmembrane region" description="Helical" evidence="3">
    <location>
        <begin position="486"/>
        <end position="506"/>
    </location>
</feature>
<feature type="topological domain" description="Cytoplasmic" evidence="3">
    <location>
        <begin position="507"/>
        <end position="687"/>
    </location>
</feature>
<feature type="domain" description="CBS 1" evidence="4">
    <location>
        <begin position="551"/>
        <end position="612"/>
    </location>
</feature>
<feature type="domain" description="CBS 2" evidence="4">
    <location>
        <begin position="628"/>
        <end position="686"/>
    </location>
</feature>
<feature type="binding site" evidence="1">
    <location>
        <position position="259"/>
    </location>
    <ligand>
        <name>Ca(2+)</name>
        <dbReference type="ChEBI" id="CHEBI:29108"/>
    </ligand>
</feature>
<feature type="binding site" evidence="1">
    <location>
        <position position="261"/>
    </location>
    <ligand>
        <name>Ca(2+)</name>
        <dbReference type="ChEBI" id="CHEBI:29108"/>
    </ligand>
</feature>
<feature type="binding site" evidence="1">
    <location>
        <position position="278"/>
    </location>
    <ligand>
        <name>Ca(2+)</name>
        <dbReference type="ChEBI" id="CHEBI:29108"/>
    </ligand>
</feature>
<feature type="binding site" evidence="1">
    <location>
        <position position="281"/>
    </location>
    <ligand>
        <name>Ca(2+)</name>
        <dbReference type="ChEBI" id="CHEBI:29108"/>
    </ligand>
</feature>
<protein>
    <recommendedName>
        <fullName>Chloride channel protein ClC-Ka</fullName>
        <shortName>Chloride channel Ka</shortName>
    </recommendedName>
    <alternativeName>
        <fullName>ClC-K1</fullName>
    </alternativeName>
</protein>
<organism>
    <name type="scientific">Oryctolagus cuniculus</name>
    <name type="common">Rabbit</name>
    <dbReference type="NCBI Taxonomy" id="9986"/>
    <lineage>
        <taxon>Eukaryota</taxon>
        <taxon>Metazoa</taxon>
        <taxon>Chordata</taxon>
        <taxon>Craniata</taxon>
        <taxon>Vertebrata</taxon>
        <taxon>Euteleostomi</taxon>
        <taxon>Mammalia</taxon>
        <taxon>Eutheria</taxon>
        <taxon>Euarchontoglires</taxon>
        <taxon>Glires</taxon>
        <taxon>Lagomorpha</taxon>
        <taxon>Leporidae</taxon>
        <taxon>Oryctolagus</taxon>
    </lineage>
</organism>
<comment type="function">
    <text evidence="1">Anion-selective channel permeable to small monovalent anions with ion selectivity for chloride &gt; bromide &gt; nitrate &gt; iodide (By similarity). Forms a homodimeric channel where each subunit has its own ion conduction pathway. May conduct double-barreled currents controlled by two types of gates, two fast gates that control each subunit independently and a slow common gate that opens and shuts off both subunits simultaneously (By similarity). Assembles with the regulatory subunit BSND/Barttin for sorting at the basolateral plasma membrane domain and functional switch to the ion conducting state. CLCNKA:BSND channels display mostly a linear current-voltage relationship with fast gating at negative potentials (By similarity). Mediates transepithelial chloride transport from the lumen to interstitial compartment along the thin ascending limb of Henle's loop, contributing to generation of hypertonic medullary interstitium as a countercurrent system to achieve urine concentration (By similarity). Conducts chloride currents in the stria vascularis of the inner ear to establish the endocochlear potential necessary for normal hearing (By similarity).</text>
</comment>
<comment type="catalytic activity">
    <reaction evidence="1">
        <text>chloride(in) = chloride(out)</text>
        <dbReference type="Rhea" id="RHEA:29823"/>
        <dbReference type="ChEBI" id="CHEBI:17996"/>
    </reaction>
</comment>
<comment type="catalytic activity">
    <reaction evidence="1">
        <text>bromide(in) = bromide(out)</text>
        <dbReference type="Rhea" id="RHEA:75383"/>
        <dbReference type="ChEBI" id="CHEBI:15858"/>
    </reaction>
</comment>
<comment type="catalytic activity">
    <reaction evidence="1">
        <text>nitrate(in) = nitrate(out)</text>
        <dbReference type="Rhea" id="RHEA:34923"/>
        <dbReference type="ChEBI" id="CHEBI:17632"/>
    </reaction>
</comment>
<comment type="catalytic activity">
    <reaction evidence="1">
        <text>iodide(out) = iodide(in)</text>
        <dbReference type="Rhea" id="RHEA:66324"/>
        <dbReference type="ChEBI" id="CHEBI:16382"/>
    </reaction>
</comment>
<comment type="subunit">
    <text evidence="1">Homodimer. Interacts with BSND.</text>
</comment>
<comment type="subcellular location">
    <subcellularLocation>
        <location evidence="2">Basolateral cell membrane</location>
        <topology evidence="3">Multi-pass membrane protein</topology>
    </subcellularLocation>
</comment>
<comment type="tissue specificity">
    <text>Expressed predominantly in the kidney.</text>
</comment>
<comment type="similarity">
    <text evidence="5">Belongs to the chloride channel (TC 2.A.49) family. CLCNKA subfamily.</text>
</comment>
<dbReference type="EMBL" id="U36789">
    <property type="protein sequence ID" value="AAC48492.1"/>
    <property type="molecule type" value="mRNA"/>
</dbReference>
<dbReference type="RefSeq" id="NP_001075830.1">
    <property type="nucleotide sequence ID" value="NM_001082361.1"/>
</dbReference>
<dbReference type="SMR" id="P51803"/>
<dbReference type="FunCoup" id="P51803">
    <property type="interactions" value="5"/>
</dbReference>
<dbReference type="STRING" id="9986.ENSOCUP00000035339"/>
<dbReference type="PaxDb" id="9986-ENSOCUP00000003674"/>
<dbReference type="GeneID" id="100009213"/>
<dbReference type="KEGG" id="ocu:100009213"/>
<dbReference type="CTD" id="1187"/>
<dbReference type="eggNOG" id="KOG0476">
    <property type="taxonomic scope" value="Eukaryota"/>
</dbReference>
<dbReference type="InParanoid" id="P51803"/>
<dbReference type="OrthoDB" id="4564at2759"/>
<dbReference type="Proteomes" id="UP000001811">
    <property type="component" value="Unplaced"/>
</dbReference>
<dbReference type="GO" id="GO:0016323">
    <property type="term" value="C:basolateral plasma membrane"/>
    <property type="evidence" value="ECO:0007669"/>
    <property type="project" value="UniProtKB-SubCell"/>
</dbReference>
<dbReference type="GO" id="GO:0034707">
    <property type="term" value="C:chloride channel complex"/>
    <property type="evidence" value="ECO:0007669"/>
    <property type="project" value="UniProtKB-KW"/>
</dbReference>
<dbReference type="GO" id="GO:0046872">
    <property type="term" value="F:metal ion binding"/>
    <property type="evidence" value="ECO:0007669"/>
    <property type="project" value="UniProtKB-KW"/>
</dbReference>
<dbReference type="GO" id="GO:0005247">
    <property type="term" value="F:voltage-gated chloride channel activity"/>
    <property type="evidence" value="ECO:0007669"/>
    <property type="project" value="InterPro"/>
</dbReference>
<dbReference type="GO" id="GO:0030321">
    <property type="term" value="P:transepithelial chloride transport"/>
    <property type="evidence" value="ECO:0007669"/>
    <property type="project" value="UniProtKB-ARBA"/>
</dbReference>
<dbReference type="CDD" id="cd04591">
    <property type="entry name" value="CBS_pair_voltage-gated_CLC_euk_bac"/>
    <property type="match status" value="1"/>
</dbReference>
<dbReference type="CDD" id="cd03683">
    <property type="entry name" value="ClC_1_like"/>
    <property type="match status" value="1"/>
</dbReference>
<dbReference type="FunFam" id="1.10.3080.10:FF:000012">
    <property type="entry name" value="Chloride channel K"/>
    <property type="match status" value="1"/>
</dbReference>
<dbReference type="FunFam" id="3.10.580.10:FF:000028">
    <property type="entry name" value="Chloride channel protein"/>
    <property type="match status" value="1"/>
</dbReference>
<dbReference type="Gene3D" id="3.10.580.10">
    <property type="entry name" value="CBS-domain"/>
    <property type="match status" value="1"/>
</dbReference>
<dbReference type="Gene3D" id="1.10.3080.10">
    <property type="entry name" value="Clc chloride channel"/>
    <property type="match status" value="1"/>
</dbReference>
<dbReference type="InterPro" id="IPR000644">
    <property type="entry name" value="CBS_dom"/>
</dbReference>
<dbReference type="InterPro" id="IPR046342">
    <property type="entry name" value="CBS_dom_sf"/>
</dbReference>
<dbReference type="InterPro" id="IPR014743">
    <property type="entry name" value="Cl-channel_core"/>
</dbReference>
<dbReference type="InterPro" id="IPR002250">
    <property type="entry name" value="Cl_channel-K"/>
</dbReference>
<dbReference type="InterPro" id="IPR050970">
    <property type="entry name" value="Cl_channel_volt-gated"/>
</dbReference>
<dbReference type="InterPro" id="IPR001807">
    <property type="entry name" value="ClC"/>
</dbReference>
<dbReference type="PANTHER" id="PTHR45720">
    <property type="entry name" value="CHLORIDE CHANNEL PROTEIN 2"/>
    <property type="match status" value="1"/>
</dbReference>
<dbReference type="PANTHER" id="PTHR45720:SF3">
    <property type="entry name" value="CHLORIDE CHANNEL PROTEIN CLC-KB"/>
    <property type="match status" value="1"/>
</dbReference>
<dbReference type="Pfam" id="PF00654">
    <property type="entry name" value="Voltage_CLC"/>
    <property type="match status" value="1"/>
</dbReference>
<dbReference type="PRINTS" id="PR00762">
    <property type="entry name" value="CLCHANNEL"/>
</dbReference>
<dbReference type="PRINTS" id="PR01119">
    <property type="entry name" value="CLCHANNELKDY"/>
</dbReference>
<dbReference type="SUPFAM" id="SSF54631">
    <property type="entry name" value="CBS-domain pair"/>
    <property type="match status" value="1"/>
</dbReference>
<dbReference type="SUPFAM" id="SSF81340">
    <property type="entry name" value="Clc chloride channel"/>
    <property type="match status" value="1"/>
</dbReference>
<dbReference type="PROSITE" id="PS51371">
    <property type="entry name" value="CBS"/>
    <property type="match status" value="2"/>
</dbReference>
<accession>P51803</accession>
<sequence length="687" mass="75202">MEELVGLREGSSGNPVALRELWGPCPRLRRGIRGGLEWLKQKLFRVGEDWYFLMTLGVLMALISYAMNFALGRVVRAHKWLYREIGDSHLLRYLSWTVYPVALVSFSSGFSQSITPFSGGSGIPELKTILSGVVLENYLDIKNFGAKVVGLSCTLATGSTLFLGKVGPFVHLSVMIAAYLGRVRTKTIGEAENKSKQNEMLVAGAAVGVATVFAAPFSGVLFCIEVMSSHFSVWDYWRGFFAATCGAFMFRLLAVFNSEQETITSLYKTSFPVDVPFDLPEIFFFVLLGAICGVASCAYLYCQRTFLAFTKTNKLISKLMATSKPLYAALAATVLASITYPPGVGRFMASRLSMREHLDTLFDNHSWALLTRNSSPPWPAEPDPQHLWWEWYHPRFTIFGTLAFFLVMKFWMLILATTIPMPAGYFLPIFIIGAAIGRLLGEALSVAFPEGIVAGGVINPIMPGGYALAGAAAFSGAVTHSISTALLAFELTGQIVHALPVLMAVLAANAIAQSCQPSFYDGTIMVKKLPYLPWIRGRPINSHRVIVEHFMRRAISTLARDAALEQVVKVLTSTDEAEYPLVESTESQLLVGIVQRAQLVQALQAEAPARASGQQRCLQDILAGGCPTEPVTLTLSPETSLHQAHNLFELLNLRSLYVTSKGRAVGYVSWVELEKAISALTNPPPAK</sequence>
<evidence type="ECO:0000250" key="1">
    <source>
        <dbReference type="UniProtKB" id="P51800"/>
    </source>
</evidence>
<evidence type="ECO:0000250" key="2">
    <source>
        <dbReference type="UniProtKB" id="Q9WUB7"/>
    </source>
</evidence>
<evidence type="ECO:0000255" key="3"/>
<evidence type="ECO:0000255" key="4">
    <source>
        <dbReference type="PROSITE-ProRule" id="PRU00703"/>
    </source>
</evidence>
<evidence type="ECO:0000305" key="5"/>
<keyword id="KW-0106">Calcium</keyword>
<keyword id="KW-0129">CBS domain</keyword>
<keyword id="KW-1003">Cell membrane</keyword>
<keyword id="KW-0868">Chloride</keyword>
<keyword id="KW-0869">Chloride channel</keyword>
<keyword id="KW-0407">Ion channel</keyword>
<keyword id="KW-0406">Ion transport</keyword>
<keyword id="KW-0472">Membrane</keyword>
<keyword id="KW-0479">Metal-binding</keyword>
<keyword id="KW-1185">Reference proteome</keyword>
<keyword id="KW-0677">Repeat</keyword>
<keyword id="KW-0812">Transmembrane</keyword>
<keyword id="KW-1133">Transmembrane helix</keyword>
<keyword id="KW-0813">Transport</keyword>
<gene>
    <name type="primary">CLCNKA</name>
</gene>
<reference key="1">
    <citation type="journal article" date="1995" name="Kidney Int.">
        <title>Cl- channels in basolateral renal medullary vesicles. X. Cloning of a Cl- channel from rabbit outer medulla.</title>
        <authorList>
            <person name="Zimniak L."/>
            <person name="Winters C.J."/>
            <person name="Reeves W.B."/>
            <person name="Andreoli T.E."/>
        </authorList>
    </citation>
    <scope>NUCLEOTIDE SEQUENCE [MRNA]</scope>
    <source>
        <tissue>Kidney</tissue>
    </source>
</reference>
<name>CLCKA_RABIT</name>
<proteinExistence type="evidence at transcript level"/>